<keyword id="KW-0025">Alternative splicing</keyword>
<keyword id="KW-1185">Reference proteome</keyword>
<accession>Q8K1C0</accession>
<accession>Q3TEH1</accession>
<accession>Q3TL94</accession>
<accession>Q8BTT0</accession>
<accession>Q9JJB0</accession>
<proteinExistence type="evidence at protein level"/>
<dbReference type="EMBL" id="AB041602">
    <property type="protein sequence ID" value="BAA95085.1"/>
    <property type="molecule type" value="mRNA"/>
</dbReference>
<dbReference type="EMBL" id="AK088834">
    <property type="protein sequence ID" value="BAC40602.1"/>
    <property type="molecule type" value="mRNA"/>
</dbReference>
<dbReference type="EMBL" id="AK135709">
    <property type="protein sequence ID" value="BAE22620.1"/>
    <property type="molecule type" value="mRNA"/>
</dbReference>
<dbReference type="EMBL" id="AK158731">
    <property type="protein sequence ID" value="BAE34634.1"/>
    <property type="molecule type" value="mRNA"/>
</dbReference>
<dbReference type="EMBL" id="AK166619">
    <property type="protein sequence ID" value="BAE38898.1"/>
    <property type="molecule type" value="mRNA"/>
</dbReference>
<dbReference type="EMBL" id="AK169653">
    <property type="protein sequence ID" value="BAE41277.1"/>
    <property type="molecule type" value="mRNA"/>
</dbReference>
<dbReference type="EMBL" id="BC024907">
    <property type="protein sequence ID" value="AAH24907.1"/>
    <property type="molecule type" value="mRNA"/>
</dbReference>
<dbReference type="CCDS" id="CCDS15612.1">
    <molecule id="Q8K1C0-1"/>
</dbReference>
<dbReference type="CCDS" id="CCDS56667.1">
    <molecule id="Q8K1C0-2"/>
</dbReference>
<dbReference type="RefSeq" id="NP_001185949.1">
    <molecule id="Q8K1C0-2"/>
    <property type="nucleotide sequence ID" value="NM_001199020.1"/>
</dbReference>
<dbReference type="RefSeq" id="NP_001344060.1">
    <molecule id="Q8K1C0-2"/>
    <property type="nucleotide sequence ID" value="NM_001357131.1"/>
</dbReference>
<dbReference type="RefSeq" id="NP_001344061.1">
    <molecule id="Q8K1C0-3"/>
    <property type="nucleotide sequence ID" value="NM_001357132.1"/>
</dbReference>
<dbReference type="RefSeq" id="NP_001344062.1">
    <molecule id="Q8K1C0-2"/>
    <property type="nucleotide sequence ID" value="NM_001357133.1"/>
</dbReference>
<dbReference type="RefSeq" id="NP_001344063.1">
    <molecule id="Q8K1C0-3"/>
    <property type="nucleotide sequence ID" value="NM_001357134.1"/>
</dbReference>
<dbReference type="RefSeq" id="NP_067396.3">
    <molecule id="Q8K1C0-1"/>
    <property type="nucleotide sequence ID" value="NM_021421.4"/>
</dbReference>
<dbReference type="RefSeq" id="XP_006497246.1">
    <molecule id="Q8K1C0-2"/>
    <property type="nucleotide sequence ID" value="XM_006497183.5"/>
</dbReference>
<dbReference type="RefSeq" id="XP_006497247.1">
    <molecule id="Q8K1C0-2"/>
    <property type="nucleotide sequence ID" value="XM_006497184.5"/>
</dbReference>
<dbReference type="RefSeq" id="XP_006497248.1">
    <property type="nucleotide sequence ID" value="XM_006497185.1"/>
</dbReference>
<dbReference type="SMR" id="Q8K1C0"/>
<dbReference type="BioGRID" id="206609">
    <property type="interactions" value="1"/>
</dbReference>
<dbReference type="FunCoup" id="Q8K1C0">
    <property type="interactions" value="4027"/>
</dbReference>
<dbReference type="STRING" id="10090.ENSMUSP00000064556"/>
<dbReference type="GlyGen" id="Q8K1C0">
    <property type="glycosylation" value="1 site, 1 O-linked glycan (1 site)"/>
</dbReference>
<dbReference type="iPTMnet" id="Q8K1C0"/>
<dbReference type="PhosphoSitePlus" id="Q8K1C0"/>
<dbReference type="SwissPalm" id="Q8K1C0"/>
<dbReference type="PaxDb" id="10090-ENSMUSP00000064556"/>
<dbReference type="PeptideAtlas" id="Q8K1C0"/>
<dbReference type="ProteomicsDB" id="282097">
    <molecule id="Q8K1C0-1"/>
</dbReference>
<dbReference type="ProteomicsDB" id="282098">
    <molecule id="Q8K1C0-2"/>
</dbReference>
<dbReference type="ProteomicsDB" id="282099">
    <molecule id="Q8K1C0-3"/>
</dbReference>
<dbReference type="ProteomicsDB" id="282100">
    <molecule id="Q8K1C0-4"/>
</dbReference>
<dbReference type="ProteomicsDB" id="282101">
    <molecule id="Q8K1C0-5"/>
</dbReference>
<dbReference type="Pumba" id="Q8K1C0"/>
<dbReference type="Antibodypedia" id="34614">
    <property type="antibodies" value="99 antibodies from 23 providers"/>
</dbReference>
<dbReference type="DNASU" id="52477"/>
<dbReference type="Ensembl" id="ENSMUST00000027947.13">
    <molecule id="Q8K1C0-2"/>
    <property type="protein sequence ID" value="ENSMUSP00000027947.7"/>
    <property type="gene ID" value="ENSMUSG00000026634.17"/>
</dbReference>
<dbReference type="Ensembl" id="ENSMUST00000066632.14">
    <molecule id="Q8K1C0-1"/>
    <property type="protein sequence ID" value="ENSMUSP00000064556.8"/>
    <property type="gene ID" value="ENSMUSG00000026634.17"/>
</dbReference>
<dbReference type="Ensembl" id="ENSMUST00000110899.7">
    <molecule id="Q8K1C0-2"/>
    <property type="protein sequence ID" value="ENSMUSP00000106524.2"/>
    <property type="gene ID" value="ENSMUSG00000026634.17"/>
</dbReference>
<dbReference type="Ensembl" id="ENSMUST00000123384.8">
    <molecule id="Q8K1C0-5"/>
    <property type="protein sequence ID" value="ENSMUSP00000117912.2"/>
    <property type="gene ID" value="ENSMUSG00000026634.17"/>
</dbReference>
<dbReference type="GeneID" id="52477"/>
<dbReference type="KEGG" id="mmu:52477"/>
<dbReference type="UCSC" id="uc007ebj.2">
    <molecule id="Q8K1C0-1"/>
    <property type="organism name" value="mouse"/>
</dbReference>
<dbReference type="AGR" id="MGI:1196310"/>
<dbReference type="CTD" id="90806"/>
<dbReference type="MGI" id="MGI:1196310">
    <property type="gene designation" value="Angel2"/>
</dbReference>
<dbReference type="VEuPathDB" id="HostDB:ENSMUSG00000026634"/>
<dbReference type="eggNOG" id="KOG0620">
    <property type="taxonomic scope" value="Eukaryota"/>
</dbReference>
<dbReference type="eggNOG" id="KOG2338">
    <property type="taxonomic scope" value="Eukaryota"/>
</dbReference>
<dbReference type="GeneTree" id="ENSGT00940000157391"/>
<dbReference type="HOGENOM" id="CLU_016428_0_2_1"/>
<dbReference type="InParanoid" id="Q8K1C0"/>
<dbReference type="OMA" id="WRPPQFC"/>
<dbReference type="OrthoDB" id="10253982at2759"/>
<dbReference type="PhylomeDB" id="Q8K1C0"/>
<dbReference type="TreeFam" id="TF316126"/>
<dbReference type="BioGRID-ORCS" id="52477">
    <property type="hits" value="1 hit in 77 CRISPR screens"/>
</dbReference>
<dbReference type="ChiTaRS" id="Angel2">
    <property type="organism name" value="mouse"/>
</dbReference>
<dbReference type="PRO" id="PR:Q8K1C0"/>
<dbReference type="Proteomes" id="UP000000589">
    <property type="component" value="Chromosome 1"/>
</dbReference>
<dbReference type="RNAct" id="Q8K1C0">
    <property type="molecule type" value="protein"/>
</dbReference>
<dbReference type="Bgee" id="ENSMUSG00000026634">
    <property type="expression patterns" value="Expressed in rostral migratory stream and 267 other cell types or tissues"/>
</dbReference>
<dbReference type="ExpressionAtlas" id="Q8K1C0">
    <property type="expression patterns" value="baseline and differential"/>
</dbReference>
<dbReference type="GO" id="GO:0015030">
    <property type="term" value="C:Cajal body"/>
    <property type="evidence" value="ECO:0007669"/>
    <property type="project" value="Ensembl"/>
</dbReference>
<dbReference type="GO" id="GO:0005759">
    <property type="term" value="C:mitochondrial matrix"/>
    <property type="evidence" value="ECO:0007669"/>
    <property type="project" value="Ensembl"/>
</dbReference>
<dbReference type="GO" id="GO:0003824">
    <property type="term" value="F:catalytic activity"/>
    <property type="evidence" value="ECO:0007669"/>
    <property type="project" value="InterPro"/>
</dbReference>
<dbReference type="GO" id="GO:0003730">
    <property type="term" value="F:mRNA 3'-UTR binding"/>
    <property type="evidence" value="ECO:0007669"/>
    <property type="project" value="Ensembl"/>
</dbReference>
<dbReference type="GO" id="GO:0070935">
    <property type="term" value="P:3'-UTR-mediated mRNA stabilization"/>
    <property type="evidence" value="ECO:0007669"/>
    <property type="project" value="Ensembl"/>
</dbReference>
<dbReference type="GO" id="GO:0090616">
    <property type="term" value="P:mitochondrial mRNA 3'-end processing"/>
    <property type="evidence" value="ECO:0000315"/>
    <property type="project" value="FlyBase"/>
</dbReference>
<dbReference type="GO" id="GO:0045930">
    <property type="term" value="P:negative regulation of mitotic cell cycle"/>
    <property type="evidence" value="ECO:0007669"/>
    <property type="project" value="Ensembl"/>
</dbReference>
<dbReference type="Gene3D" id="3.60.10.10">
    <property type="entry name" value="Endonuclease/exonuclease/phosphatase"/>
    <property type="match status" value="1"/>
</dbReference>
<dbReference type="InterPro" id="IPR045816">
    <property type="entry name" value="ANGEL2_N"/>
</dbReference>
<dbReference type="InterPro" id="IPR050410">
    <property type="entry name" value="CCR4/nocturin_mRNA_transcr"/>
</dbReference>
<dbReference type="InterPro" id="IPR036691">
    <property type="entry name" value="Endo/exonu/phosph_ase_sf"/>
</dbReference>
<dbReference type="InterPro" id="IPR005135">
    <property type="entry name" value="Endo/exonuclease/phosphatase"/>
</dbReference>
<dbReference type="PANTHER" id="PTHR12121">
    <property type="entry name" value="CARBON CATABOLITE REPRESSOR PROTEIN 4"/>
    <property type="match status" value="1"/>
</dbReference>
<dbReference type="PANTHER" id="PTHR12121:SF27">
    <property type="entry name" value="PROTEIN ANGEL HOMOLOG 2"/>
    <property type="match status" value="1"/>
</dbReference>
<dbReference type="Pfam" id="PF19339">
    <property type="entry name" value="ANGEL2_N"/>
    <property type="match status" value="2"/>
</dbReference>
<dbReference type="Pfam" id="PF03372">
    <property type="entry name" value="Exo_endo_phos"/>
    <property type="match status" value="1"/>
</dbReference>
<dbReference type="SUPFAM" id="SSF56219">
    <property type="entry name" value="DNase I-like"/>
    <property type="match status" value="1"/>
</dbReference>
<sequence length="544" mass="62413">METWRCVRRGYGRCVAGRGRYSMFPYPLKSLGRDWTTPWEDLQKYCWRRHISSCLRWPGHYSRAPYPYFSSRHFSLNCRPPFLFESGTQFQYYNWRSDHLSNASLIHLSRHVMTSDRDEPLSKRRKHQGTIKRNWEYLCSHNKENTKDLEDRNVDSTCEDREDKFDFSVMSYNILSQDLLEDNSHLYRHCRRPVLHWSFRFPNILKEIKHFDADVLCLQEVQEDHYGTEIRPSLESLGYHCEYKMKTGRKPDGCAICFKHSRFSLLSVNPVEFCRRDIPLLDRDNIGLVLLLQPKIPRAASPSICIANTHLLYNPRRGDIKLTQLAMLLAEIANVTHRKDGSSCPIVMCGDFNSVPGSPLYSFIKEGKLNYEGLAIGKVSGQEQSSRGQRILSIPIWPPNLGISQNCVYEAQQVPKVEKTDSDVTQAQQEKAEVPVSADKVSSHLQHGFSLSSVYSHYVPDTGVPEVTTCHSRSAITVDYIFYTAKKENTAQGPGAEVALVGGLKLLARLSLLTEQDLWTVNGLPNEHNSSDHLPLLAKFRLEL</sequence>
<protein>
    <recommendedName>
        <fullName>Protein angel homolog 2</fullName>
    </recommendedName>
</protein>
<name>ANGE2_MOUSE</name>
<feature type="chain" id="PRO_0000305081" description="Protein angel homolog 2">
    <location>
        <begin position="1"/>
        <end position="544"/>
    </location>
</feature>
<feature type="splice variant" id="VSP_028217" description="In isoform 3, isoform 4 and isoform 5." evidence="1 2">
    <location>
        <begin position="1"/>
        <end position="169"/>
    </location>
</feature>
<feature type="splice variant" id="VSP_028218" description="In isoform 2." evidence="1">
    <location>
        <begin position="1"/>
        <end position="22"/>
    </location>
</feature>
<feature type="splice variant" id="VSP_028219" description="In isoform 5." evidence="2">
    <original>VSG</original>
    <variation>TVM</variation>
    <location>
        <begin position="379"/>
        <end position="381"/>
    </location>
</feature>
<feature type="splice variant" id="VSP_028220" description="In isoform 4." evidence="1">
    <original>G</original>
    <variation>A</variation>
    <location>
        <position position="381"/>
    </location>
</feature>
<feature type="splice variant" id="VSP_028221" description="In isoform 4 and isoform 5." evidence="1 2">
    <location>
        <begin position="382"/>
        <end position="544"/>
    </location>
</feature>
<evidence type="ECO:0000303" key="1">
    <source>
    </source>
</evidence>
<evidence type="ECO:0000303" key="2">
    <source ref="1"/>
</evidence>
<evidence type="ECO:0000305" key="3"/>
<organism>
    <name type="scientific">Mus musculus</name>
    <name type="common">Mouse</name>
    <dbReference type="NCBI Taxonomy" id="10090"/>
    <lineage>
        <taxon>Eukaryota</taxon>
        <taxon>Metazoa</taxon>
        <taxon>Chordata</taxon>
        <taxon>Craniata</taxon>
        <taxon>Vertebrata</taxon>
        <taxon>Euteleostomi</taxon>
        <taxon>Mammalia</taxon>
        <taxon>Eutheria</taxon>
        <taxon>Euarchontoglires</taxon>
        <taxon>Glires</taxon>
        <taxon>Rodentia</taxon>
        <taxon>Myomorpha</taxon>
        <taxon>Muroidea</taxon>
        <taxon>Muridae</taxon>
        <taxon>Murinae</taxon>
        <taxon>Mus</taxon>
        <taxon>Mus</taxon>
    </lineage>
</organism>
<gene>
    <name type="primary">Angel2</name>
    <name type="synonym">D1Ertd396e</name>
    <name type="synonym">D1Ertd654e</name>
    <name type="ORF">MNCb-4273</name>
</gene>
<comment type="alternative products">
    <event type="alternative splicing"/>
    <isoform>
        <id>Q8K1C0-1</id>
        <name>1</name>
        <sequence type="displayed"/>
    </isoform>
    <isoform>
        <id>Q8K1C0-2</id>
        <name>2</name>
        <sequence type="described" ref="VSP_028218"/>
    </isoform>
    <isoform>
        <id>Q8K1C0-3</id>
        <name>3</name>
        <sequence type="described" ref="VSP_028217"/>
    </isoform>
    <isoform>
        <id>Q8K1C0-4</id>
        <name>4</name>
        <sequence type="described" ref="VSP_028217 VSP_028220 VSP_028221"/>
    </isoform>
    <isoform>
        <id>Q8K1C0-5</id>
        <name>5</name>
        <sequence type="described" ref="VSP_028217 VSP_028219 VSP_028221"/>
    </isoform>
</comment>
<comment type="similarity">
    <text evidence="3">Belongs to the CCR4/nocturin family.</text>
</comment>
<reference key="1">
    <citation type="submission" date="2000-04" db="EMBL/GenBank/DDBJ databases">
        <title>Isolation of full-length cDNA clones from mouse brain cDNA library made by oligo-capping method.</title>
        <authorList>
            <person name="Osada N."/>
            <person name="Kusuda J."/>
            <person name="Tanuma R."/>
            <person name="Ito A."/>
            <person name="Hirata M."/>
            <person name="Sugano S."/>
            <person name="Hashimoto K."/>
        </authorList>
    </citation>
    <scope>NUCLEOTIDE SEQUENCE [LARGE SCALE MRNA] (ISOFORM 5)</scope>
    <source>
        <strain>C57BL/6J</strain>
        <tissue>Brain</tissue>
    </source>
</reference>
<reference key="2">
    <citation type="journal article" date="2005" name="Science">
        <title>The transcriptional landscape of the mammalian genome.</title>
        <authorList>
            <person name="Carninci P."/>
            <person name="Kasukawa T."/>
            <person name="Katayama S."/>
            <person name="Gough J."/>
            <person name="Frith M.C."/>
            <person name="Maeda N."/>
            <person name="Oyama R."/>
            <person name="Ravasi T."/>
            <person name="Lenhard B."/>
            <person name="Wells C."/>
            <person name="Kodzius R."/>
            <person name="Shimokawa K."/>
            <person name="Bajic V.B."/>
            <person name="Brenner S.E."/>
            <person name="Batalov S."/>
            <person name="Forrest A.R."/>
            <person name="Zavolan M."/>
            <person name="Davis M.J."/>
            <person name="Wilming L.G."/>
            <person name="Aidinis V."/>
            <person name="Allen J.E."/>
            <person name="Ambesi-Impiombato A."/>
            <person name="Apweiler R."/>
            <person name="Aturaliya R.N."/>
            <person name="Bailey T.L."/>
            <person name="Bansal M."/>
            <person name="Baxter L."/>
            <person name="Beisel K.W."/>
            <person name="Bersano T."/>
            <person name="Bono H."/>
            <person name="Chalk A.M."/>
            <person name="Chiu K.P."/>
            <person name="Choudhary V."/>
            <person name="Christoffels A."/>
            <person name="Clutterbuck D.R."/>
            <person name="Crowe M.L."/>
            <person name="Dalla E."/>
            <person name="Dalrymple B.P."/>
            <person name="de Bono B."/>
            <person name="Della Gatta G."/>
            <person name="di Bernardo D."/>
            <person name="Down T."/>
            <person name="Engstrom P."/>
            <person name="Fagiolini M."/>
            <person name="Faulkner G."/>
            <person name="Fletcher C.F."/>
            <person name="Fukushima T."/>
            <person name="Furuno M."/>
            <person name="Futaki S."/>
            <person name="Gariboldi M."/>
            <person name="Georgii-Hemming P."/>
            <person name="Gingeras T.R."/>
            <person name="Gojobori T."/>
            <person name="Green R.E."/>
            <person name="Gustincich S."/>
            <person name="Harbers M."/>
            <person name="Hayashi Y."/>
            <person name="Hensch T.K."/>
            <person name="Hirokawa N."/>
            <person name="Hill D."/>
            <person name="Huminiecki L."/>
            <person name="Iacono M."/>
            <person name="Ikeo K."/>
            <person name="Iwama A."/>
            <person name="Ishikawa T."/>
            <person name="Jakt M."/>
            <person name="Kanapin A."/>
            <person name="Katoh M."/>
            <person name="Kawasawa Y."/>
            <person name="Kelso J."/>
            <person name="Kitamura H."/>
            <person name="Kitano H."/>
            <person name="Kollias G."/>
            <person name="Krishnan S.P."/>
            <person name="Kruger A."/>
            <person name="Kummerfeld S.K."/>
            <person name="Kurochkin I.V."/>
            <person name="Lareau L.F."/>
            <person name="Lazarevic D."/>
            <person name="Lipovich L."/>
            <person name="Liu J."/>
            <person name="Liuni S."/>
            <person name="McWilliam S."/>
            <person name="Madan Babu M."/>
            <person name="Madera M."/>
            <person name="Marchionni L."/>
            <person name="Matsuda H."/>
            <person name="Matsuzawa S."/>
            <person name="Miki H."/>
            <person name="Mignone F."/>
            <person name="Miyake S."/>
            <person name="Morris K."/>
            <person name="Mottagui-Tabar S."/>
            <person name="Mulder N."/>
            <person name="Nakano N."/>
            <person name="Nakauchi H."/>
            <person name="Ng P."/>
            <person name="Nilsson R."/>
            <person name="Nishiguchi S."/>
            <person name="Nishikawa S."/>
            <person name="Nori F."/>
            <person name="Ohara O."/>
            <person name="Okazaki Y."/>
            <person name="Orlando V."/>
            <person name="Pang K.C."/>
            <person name="Pavan W.J."/>
            <person name="Pavesi G."/>
            <person name="Pesole G."/>
            <person name="Petrovsky N."/>
            <person name="Piazza S."/>
            <person name="Reed J."/>
            <person name="Reid J.F."/>
            <person name="Ring B.Z."/>
            <person name="Ringwald M."/>
            <person name="Rost B."/>
            <person name="Ruan Y."/>
            <person name="Salzberg S.L."/>
            <person name="Sandelin A."/>
            <person name="Schneider C."/>
            <person name="Schoenbach C."/>
            <person name="Sekiguchi K."/>
            <person name="Semple C.A."/>
            <person name="Seno S."/>
            <person name="Sessa L."/>
            <person name="Sheng Y."/>
            <person name="Shibata Y."/>
            <person name="Shimada H."/>
            <person name="Shimada K."/>
            <person name="Silva D."/>
            <person name="Sinclair B."/>
            <person name="Sperling S."/>
            <person name="Stupka E."/>
            <person name="Sugiura K."/>
            <person name="Sultana R."/>
            <person name="Takenaka Y."/>
            <person name="Taki K."/>
            <person name="Tammoja K."/>
            <person name="Tan S.L."/>
            <person name="Tang S."/>
            <person name="Taylor M.S."/>
            <person name="Tegner J."/>
            <person name="Teichmann S.A."/>
            <person name="Ueda H.R."/>
            <person name="van Nimwegen E."/>
            <person name="Verardo R."/>
            <person name="Wei C.L."/>
            <person name="Yagi K."/>
            <person name="Yamanishi H."/>
            <person name="Zabarovsky E."/>
            <person name="Zhu S."/>
            <person name="Zimmer A."/>
            <person name="Hide W."/>
            <person name="Bult C."/>
            <person name="Grimmond S.M."/>
            <person name="Teasdale R.D."/>
            <person name="Liu E.T."/>
            <person name="Brusic V."/>
            <person name="Quackenbush J."/>
            <person name="Wahlestedt C."/>
            <person name="Mattick J.S."/>
            <person name="Hume D.A."/>
            <person name="Kai C."/>
            <person name="Sasaki D."/>
            <person name="Tomaru Y."/>
            <person name="Fukuda S."/>
            <person name="Kanamori-Katayama M."/>
            <person name="Suzuki M."/>
            <person name="Aoki J."/>
            <person name="Arakawa T."/>
            <person name="Iida J."/>
            <person name="Imamura K."/>
            <person name="Itoh M."/>
            <person name="Kato T."/>
            <person name="Kawaji H."/>
            <person name="Kawagashira N."/>
            <person name="Kawashima T."/>
            <person name="Kojima M."/>
            <person name="Kondo S."/>
            <person name="Konno H."/>
            <person name="Nakano K."/>
            <person name="Ninomiya N."/>
            <person name="Nishio T."/>
            <person name="Okada M."/>
            <person name="Plessy C."/>
            <person name="Shibata K."/>
            <person name="Shiraki T."/>
            <person name="Suzuki S."/>
            <person name="Tagami M."/>
            <person name="Waki K."/>
            <person name="Watahiki A."/>
            <person name="Okamura-Oho Y."/>
            <person name="Suzuki H."/>
            <person name="Kawai J."/>
            <person name="Hayashizaki Y."/>
        </authorList>
    </citation>
    <scope>NUCLEOTIDE SEQUENCE [LARGE SCALE MRNA] (ISOFORMS 1; 2; 3 AND 4)</scope>
    <source>
        <strain>C57BL/6J</strain>
        <strain>NOD</strain>
        <tissue>Egg</tissue>
        <tissue>Thymus</tissue>
        <tissue>Visual cortex</tissue>
    </source>
</reference>
<reference key="3">
    <citation type="journal article" date="2004" name="Genome Res.">
        <title>The status, quality, and expansion of the NIH full-length cDNA project: the Mammalian Gene Collection (MGC).</title>
        <authorList>
            <consortium name="The MGC Project Team"/>
        </authorList>
    </citation>
    <scope>NUCLEOTIDE SEQUENCE [LARGE SCALE MRNA] (ISOFORM 1)</scope>
    <source>
        <tissue>Mammary tumor</tissue>
    </source>
</reference>
<reference key="4">
    <citation type="journal article" date="2010" name="Cell">
        <title>A tissue-specific atlas of mouse protein phosphorylation and expression.</title>
        <authorList>
            <person name="Huttlin E.L."/>
            <person name="Jedrychowski M.P."/>
            <person name="Elias J.E."/>
            <person name="Goswami T."/>
            <person name="Rad R."/>
            <person name="Beausoleil S.A."/>
            <person name="Villen J."/>
            <person name="Haas W."/>
            <person name="Sowa M.E."/>
            <person name="Gygi S.P."/>
        </authorList>
    </citation>
    <scope>IDENTIFICATION BY MASS SPECTROMETRY [LARGE SCALE ANALYSIS]</scope>
    <source>
        <tissue>Heart</tissue>
        <tissue>Spleen</tissue>
    </source>
</reference>